<proteinExistence type="inferred from homology"/>
<comment type="function">
    <text evidence="1">Catalyzes the isomerization between 2-isopropylmalate and 3-isopropylmalate, via the formation of 2-isopropylmaleate.</text>
</comment>
<comment type="catalytic activity">
    <reaction>
        <text>(2R,3S)-3-isopropylmalate = (2S)-2-isopropylmalate</text>
        <dbReference type="Rhea" id="RHEA:32287"/>
        <dbReference type="ChEBI" id="CHEBI:1178"/>
        <dbReference type="ChEBI" id="CHEBI:35121"/>
        <dbReference type="EC" id="4.2.1.33"/>
    </reaction>
</comment>
<comment type="pathway">
    <text>Amino-acid biosynthesis; L-leucine biosynthesis; L-leucine from 3-methyl-2-oxobutanoate: step 2/4.</text>
</comment>
<comment type="subunit">
    <text evidence="1">Heterodimer of LeuC and LeuD.</text>
</comment>
<comment type="similarity">
    <text evidence="2">Belongs to the LeuD family. LeuD type 1 subfamily.</text>
</comment>
<dbReference type="EC" id="4.2.1.33"/>
<dbReference type="EMBL" id="AF041836">
    <property type="protein sequence ID" value="AAD12596.1"/>
    <property type="molecule type" value="Genomic_DNA"/>
</dbReference>
<dbReference type="RefSeq" id="NP_047183.1">
    <property type="nucleotide sequence ID" value="NC_001910.1"/>
</dbReference>
<dbReference type="SMR" id="O85066"/>
<dbReference type="UniPathway" id="UPA00048">
    <property type="reaction ID" value="UER00071"/>
</dbReference>
<dbReference type="Proteomes" id="UP000000416">
    <property type="component" value="Plasmid pLeu-Sg"/>
</dbReference>
<dbReference type="GO" id="GO:0009316">
    <property type="term" value="C:3-isopropylmalate dehydratase complex"/>
    <property type="evidence" value="ECO:0007669"/>
    <property type="project" value="InterPro"/>
</dbReference>
<dbReference type="GO" id="GO:0003861">
    <property type="term" value="F:3-isopropylmalate dehydratase activity"/>
    <property type="evidence" value="ECO:0007669"/>
    <property type="project" value="UniProtKB-UniRule"/>
</dbReference>
<dbReference type="GO" id="GO:0009098">
    <property type="term" value="P:L-leucine biosynthetic process"/>
    <property type="evidence" value="ECO:0007669"/>
    <property type="project" value="UniProtKB-UniRule"/>
</dbReference>
<dbReference type="CDD" id="cd01577">
    <property type="entry name" value="IPMI_Swivel"/>
    <property type="match status" value="1"/>
</dbReference>
<dbReference type="FunFam" id="3.20.19.10:FF:000003">
    <property type="entry name" value="3-isopropylmalate dehydratase small subunit"/>
    <property type="match status" value="1"/>
</dbReference>
<dbReference type="Gene3D" id="3.20.19.10">
    <property type="entry name" value="Aconitase, domain 4"/>
    <property type="match status" value="1"/>
</dbReference>
<dbReference type="HAMAP" id="MF_01031">
    <property type="entry name" value="LeuD_type1"/>
    <property type="match status" value="1"/>
</dbReference>
<dbReference type="InterPro" id="IPR004431">
    <property type="entry name" value="3-IsopropMal_deHydase_ssu"/>
</dbReference>
<dbReference type="InterPro" id="IPR015928">
    <property type="entry name" value="Aconitase/3IPM_dehydase_swvl"/>
</dbReference>
<dbReference type="InterPro" id="IPR000573">
    <property type="entry name" value="AconitaseA/IPMdHydase_ssu_swvl"/>
</dbReference>
<dbReference type="InterPro" id="IPR033940">
    <property type="entry name" value="IPMI_Swivel"/>
</dbReference>
<dbReference type="InterPro" id="IPR050075">
    <property type="entry name" value="LeuD"/>
</dbReference>
<dbReference type="NCBIfam" id="TIGR00171">
    <property type="entry name" value="leuD"/>
    <property type="match status" value="1"/>
</dbReference>
<dbReference type="NCBIfam" id="NF002458">
    <property type="entry name" value="PRK01641.1"/>
    <property type="match status" value="1"/>
</dbReference>
<dbReference type="PANTHER" id="PTHR43345:SF5">
    <property type="entry name" value="3-ISOPROPYLMALATE DEHYDRATASE SMALL SUBUNIT"/>
    <property type="match status" value="1"/>
</dbReference>
<dbReference type="PANTHER" id="PTHR43345">
    <property type="entry name" value="3-ISOPROPYLMALATE DEHYDRATASE SMALL SUBUNIT 2-RELATED-RELATED"/>
    <property type="match status" value="1"/>
</dbReference>
<dbReference type="Pfam" id="PF00694">
    <property type="entry name" value="Aconitase_C"/>
    <property type="match status" value="1"/>
</dbReference>
<dbReference type="SUPFAM" id="SSF52016">
    <property type="entry name" value="LeuD/IlvD-like"/>
    <property type="match status" value="1"/>
</dbReference>
<sequence>MFKFIEHTGVVVPLNISNIDTDAIIPKQFLKKVNKIGFGKYLFHDWRFLDKNQLKINPNFILNKSTYKNASILLTRENFGCGSSREHAVWSLLDYGFKVIIASSFSDIFYSNSFNNKLLLIVLENEDIDYLFDLVNTKIGLSFNVSLIHKKITVDNLDIPFQIDDFQRLCLVNNWDNNDLTMKIDHKIKLYEKNIFSFLLKREKFTS</sequence>
<keyword id="KW-0028">Amino-acid biosynthesis</keyword>
<keyword id="KW-0100">Branched-chain amino acid biosynthesis</keyword>
<keyword id="KW-0432">Leucine biosynthesis</keyword>
<keyword id="KW-0456">Lyase</keyword>
<keyword id="KW-0614">Plasmid</keyword>
<geneLocation type="plasmid">
    <name>pLeu-Sg</name>
    <name>pBSg1</name>
</geneLocation>
<evidence type="ECO:0000250" key="1"/>
<evidence type="ECO:0000305" key="2"/>
<gene>
    <name type="primary">leuD</name>
    <name type="ordered locus">BUsg_PL7</name>
</gene>
<protein>
    <recommendedName>
        <fullName>3-isopropylmalate dehydratase small subunit</fullName>
        <ecNumber>4.2.1.33</ecNumber>
    </recommendedName>
    <alternativeName>
        <fullName>Alpha-IPM isomerase</fullName>
        <shortName>IPMI</shortName>
    </alternativeName>
    <alternativeName>
        <fullName>Isopropylmalate isomerase</fullName>
    </alternativeName>
</protein>
<name>LEUD_BUCAP</name>
<organism>
    <name type="scientific">Buchnera aphidicola subsp. Schizaphis graminum (strain Sg)</name>
    <dbReference type="NCBI Taxonomy" id="198804"/>
    <lineage>
        <taxon>Bacteria</taxon>
        <taxon>Pseudomonadati</taxon>
        <taxon>Pseudomonadota</taxon>
        <taxon>Gammaproteobacteria</taxon>
        <taxon>Enterobacterales</taxon>
        <taxon>Erwiniaceae</taxon>
        <taxon>Buchnera</taxon>
    </lineage>
</organism>
<reference key="1">
    <citation type="journal article" date="1999" name="J. Mol. Evol.">
        <title>Genetic characterization of plasmids containing genes encoding enzymes of leucine biosynthesis in endosymbionts (Buchnera) of aphids.</title>
        <authorList>
            <person name="Baumann L."/>
            <person name="Baumann P."/>
            <person name="Moran N.A."/>
            <person name="Sandstroem J.P."/>
            <person name="Thao M.L."/>
        </authorList>
    </citation>
    <scope>NUCLEOTIDE SEQUENCE [LARGE SCALE GENOMIC DNA]</scope>
    <source>
        <strain>Sg</strain>
    </source>
</reference>
<accession>O85066</accession>
<feature type="chain" id="PRO_0000141803" description="3-isopropylmalate dehydratase small subunit">
    <location>
        <begin position="1"/>
        <end position="207"/>
    </location>
</feature>